<proteinExistence type="inferred from homology"/>
<organism>
    <name type="scientific">Danio rerio</name>
    <name type="common">Zebrafish</name>
    <name type="synonym">Brachydanio rerio</name>
    <dbReference type="NCBI Taxonomy" id="7955"/>
    <lineage>
        <taxon>Eukaryota</taxon>
        <taxon>Metazoa</taxon>
        <taxon>Chordata</taxon>
        <taxon>Craniata</taxon>
        <taxon>Vertebrata</taxon>
        <taxon>Euteleostomi</taxon>
        <taxon>Actinopterygii</taxon>
        <taxon>Neopterygii</taxon>
        <taxon>Teleostei</taxon>
        <taxon>Ostariophysi</taxon>
        <taxon>Cypriniformes</taxon>
        <taxon>Danionidae</taxon>
        <taxon>Danioninae</taxon>
        <taxon>Danio</taxon>
    </lineage>
</organism>
<keyword id="KW-1003">Cell membrane</keyword>
<keyword id="KW-0449">Lipoprotein</keyword>
<keyword id="KW-0472">Membrane</keyword>
<keyword id="KW-0519">Myristate</keyword>
<keyword id="KW-0564">Palmitate</keyword>
<keyword id="KW-1185">Reference proteome</keyword>
<protein>
    <recommendedName>
        <fullName>Small membrane A-kinase anchor protein</fullName>
        <shortName>Small membrane AKAP</shortName>
        <shortName>smAKAP</shortName>
    </recommendedName>
</protein>
<name>SMAKA_DANRE</name>
<dbReference type="EMBL" id="BX323586">
    <property type="status" value="NOT_ANNOTATED_CDS"/>
    <property type="molecule type" value="Genomic_DNA"/>
</dbReference>
<dbReference type="RefSeq" id="NP_001410368.1">
    <property type="nucleotide sequence ID" value="NM_001423439.1"/>
</dbReference>
<dbReference type="SMR" id="P0C8S0"/>
<dbReference type="FunCoup" id="P0C8S0">
    <property type="interactions" value="1261"/>
</dbReference>
<dbReference type="STRING" id="7955.ENSDARP00000128446"/>
<dbReference type="PaxDb" id="7955-ENSDARP00000128446"/>
<dbReference type="Ensembl" id="ENSDART00000155604">
    <property type="protein sequence ID" value="ENSDARP00000128446"/>
    <property type="gene ID" value="ENSDARG00000097855"/>
</dbReference>
<dbReference type="Ensembl" id="ENSDART00000165103">
    <property type="protein sequence ID" value="ENSDARP00000139758"/>
    <property type="gene ID" value="ENSDARG00000097855"/>
</dbReference>
<dbReference type="GeneID" id="101886596"/>
<dbReference type="eggNOG" id="ENOG502S8S1">
    <property type="taxonomic scope" value="Eukaryota"/>
</dbReference>
<dbReference type="HOGENOM" id="CLU_187810_0_0_1"/>
<dbReference type="InParanoid" id="P0C8S0"/>
<dbReference type="OMA" id="QTFPFPN"/>
<dbReference type="PRO" id="PR:P0C8S0"/>
<dbReference type="Proteomes" id="UP000000437">
    <property type="component" value="Chromosome 9"/>
</dbReference>
<dbReference type="Bgee" id="ENSDARG00000097855">
    <property type="expression patterns" value="Expressed in intestine and 16 other cell types or tissues"/>
</dbReference>
<dbReference type="GO" id="GO:0005886">
    <property type="term" value="C:plasma membrane"/>
    <property type="evidence" value="ECO:0007669"/>
    <property type="project" value="UniProtKB-SubCell"/>
</dbReference>
<dbReference type="GO" id="GO:0034237">
    <property type="term" value="F:protein kinase A regulatory subunit binding"/>
    <property type="evidence" value="ECO:0007669"/>
    <property type="project" value="InterPro"/>
</dbReference>
<dbReference type="InterPro" id="IPR027969">
    <property type="entry name" value="Small_membr_AKAP"/>
</dbReference>
<dbReference type="PANTHER" id="PTHR36471">
    <property type="entry name" value="SMALL MEMBRANE A-KINASE ANCHOR PROTEIN"/>
    <property type="match status" value="1"/>
</dbReference>
<dbReference type="PANTHER" id="PTHR36471:SF1">
    <property type="entry name" value="SMALL MEMBRANE A-KINASE ANCHOR PROTEIN"/>
    <property type="match status" value="1"/>
</dbReference>
<dbReference type="Pfam" id="PF15127">
    <property type="entry name" value="SmAKAP"/>
    <property type="match status" value="1"/>
</dbReference>
<reference key="1">
    <citation type="journal article" date="2013" name="Nature">
        <title>The zebrafish reference genome sequence and its relationship to the human genome.</title>
        <authorList>
            <person name="Howe K."/>
            <person name="Clark M.D."/>
            <person name="Torroja C.F."/>
            <person name="Torrance J."/>
            <person name="Berthelot C."/>
            <person name="Muffato M."/>
            <person name="Collins J.E."/>
            <person name="Humphray S."/>
            <person name="McLaren K."/>
            <person name="Matthews L."/>
            <person name="McLaren S."/>
            <person name="Sealy I."/>
            <person name="Caccamo M."/>
            <person name="Churcher C."/>
            <person name="Scott C."/>
            <person name="Barrett J.C."/>
            <person name="Koch R."/>
            <person name="Rauch G.J."/>
            <person name="White S."/>
            <person name="Chow W."/>
            <person name="Kilian B."/>
            <person name="Quintais L.T."/>
            <person name="Guerra-Assuncao J.A."/>
            <person name="Zhou Y."/>
            <person name="Gu Y."/>
            <person name="Yen J."/>
            <person name="Vogel J.H."/>
            <person name="Eyre T."/>
            <person name="Redmond S."/>
            <person name="Banerjee R."/>
            <person name="Chi J."/>
            <person name="Fu B."/>
            <person name="Langley E."/>
            <person name="Maguire S.F."/>
            <person name="Laird G.K."/>
            <person name="Lloyd D."/>
            <person name="Kenyon E."/>
            <person name="Donaldson S."/>
            <person name="Sehra H."/>
            <person name="Almeida-King J."/>
            <person name="Loveland J."/>
            <person name="Trevanion S."/>
            <person name="Jones M."/>
            <person name="Quail M."/>
            <person name="Willey D."/>
            <person name="Hunt A."/>
            <person name="Burton J."/>
            <person name="Sims S."/>
            <person name="McLay K."/>
            <person name="Plumb B."/>
            <person name="Davis J."/>
            <person name="Clee C."/>
            <person name="Oliver K."/>
            <person name="Clark R."/>
            <person name="Riddle C."/>
            <person name="Elliot D."/>
            <person name="Threadgold G."/>
            <person name="Harden G."/>
            <person name="Ware D."/>
            <person name="Begum S."/>
            <person name="Mortimore B."/>
            <person name="Kerry G."/>
            <person name="Heath P."/>
            <person name="Phillimore B."/>
            <person name="Tracey A."/>
            <person name="Corby N."/>
            <person name="Dunn M."/>
            <person name="Johnson C."/>
            <person name="Wood J."/>
            <person name="Clark S."/>
            <person name="Pelan S."/>
            <person name="Griffiths G."/>
            <person name="Smith M."/>
            <person name="Glithero R."/>
            <person name="Howden P."/>
            <person name="Barker N."/>
            <person name="Lloyd C."/>
            <person name="Stevens C."/>
            <person name="Harley J."/>
            <person name="Holt K."/>
            <person name="Panagiotidis G."/>
            <person name="Lovell J."/>
            <person name="Beasley H."/>
            <person name="Henderson C."/>
            <person name="Gordon D."/>
            <person name="Auger K."/>
            <person name="Wright D."/>
            <person name="Collins J."/>
            <person name="Raisen C."/>
            <person name="Dyer L."/>
            <person name="Leung K."/>
            <person name="Robertson L."/>
            <person name="Ambridge K."/>
            <person name="Leongamornlert D."/>
            <person name="McGuire S."/>
            <person name="Gilderthorp R."/>
            <person name="Griffiths C."/>
            <person name="Manthravadi D."/>
            <person name="Nichol S."/>
            <person name="Barker G."/>
            <person name="Whitehead S."/>
            <person name="Kay M."/>
            <person name="Brown J."/>
            <person name="Murnane C."/>
            <person name="Gray E."/>
            <person name="Humphries M."/>
            <person name="Sycamore N."/>
            <person name="Barker D."/>
            <person name="Saunders D."/>
            <person name="Wallis J."/>
            <person name="Babbage A."/>
            <person name="Hammond S."/>
            <person name="Mashreghi-Mohammadi M."/>
            <person name="Barr L."/>
            <person name="Martin S."/>
            <person name="Wray P."/>
            <person name="Ellington A."/>
            <person name="Matthews N."/>
            <person name="Ellwood M."/>
            <person name="Woodmansey R."/>
            <person name="Clark G."/>
            <person name="Cooper J."/>
            <person name="Tromans A."/>
            <person name="Grafham D."/>
            <person name="Skuce C."/>
            <person name="Pandian R."/>
            <person name="Andrews R."/>
            <person name="Harrison E."/>
            <person name="Kimberley A."/>
            <person name="Garnett J."/>
            <person name="Fosker N."/>
            <person name="Hall R."/>
            <person name="Garner P."/>
            <person name="Kelly D."/>
            <person name="Bird C."/>
            <person name="Palmer S."/>
            <person name="Gehring I."/>
            <person name="Berger A."/>
            <person name="Dooley C.M."/>
            <person name="Ersan-Urun Z."/>
            <person name="Eser C."/>
            <person name="Geiger H."/>
            <person name="Geisler M."/>
            <person name="Karotki L."/>
            <person name="Kirn A."/>
            <person name="Konantz J."/>
            <person name="Konantz M."/>
            <person name="Oberlander M."/>
            <person name="Rudolph-Geiger S."/>
            <person name="Teucke M."/>
            <person name="Lanz C."/>
            <person name="Raddatz G."/>
            <person name="Osoegawa K."/>
            <person name="Zhu B."/>
            <person name="Rapp A."/>
            <person name="Widaa S."/>
            <person name="Langford C."/>
            <person name="Yang F."/>
            <person name="Schuster S.C."/>
            <person name="Carter N.P."/>
            <person name="Harrow J."/>
            <person name="Ning Z."/>
            <person name="Herrero J."/>
            <person name="Searle S.M."/>
            <person name="Enright A."/>
            <person name="Geisler R."/>
            <person name="Plasterk R.H."/>
            <person name="Lee C."/>
            <person name="Westerfield M."/>
            <person name="de Jong P.J."/>
            <person name="Zon L.I."/>
            <person name="Postlethwait J.H."/>
            <person name="Nusslein-Volhard C."/>
            <person name="Hubbard T.J."/>
            <person name="Roest Crollius H."/>
            <person name="Rogers J."/>
            <person name="Stemple D.L."/>
        </authorList>
    </citation>
    <scope>NUCLEOTIDE SEQUENCE [LARGE SCALE GENOMIC DNA]</scope>
    <source>
        <strain>Tuebingen</strain>
    </source>
</reference>
<accession>P0C8S0</accession>
<feature type="initiator methionine" description="Removed" evidence="2">
    <location>
        <position position="1"/>
    </location>
</feature>
<feature type="chain" id="PRO_0000365559" description="Small membrane A-kinase anchor protein">
    <location>
        <begin position="2"/>
        <end position="89"/>
    </location>
</feature>
<feature type="region of interest" description="Disordered" evidence="3">
    <location>
        <begin position="1"/>
        <end position="29"/>
    </location>
</feature>
<feature type="compositionally biased region" description="Basic and acidic residues" evidence="3">
    <location>
        <begin position="17"/>
        <end position="29"/>
    </location>
</feature>
<feature type="lipid moiety-binding region" description="N-myristoyl glycine" evidence="2">
    <location>
        <position position="2"/>
    </location>
</feature>
<evidence type="ECO:0000250" key="1"/>
<evidence type="ECO:0000255" key="2"/>
<evidence type="ECO:0000256" key="3">
    <source>
        <dbReference type="SAM" id="MobiDB-lite"/>
    </source>
</evidence>
<evidence type="ECO:0000305" key="4"/>
<sequence length="89" mass="9987">MGCMKSKRRDPTQNSDSSEKVDGKPGKHGEKAVLVFSEIGSMEDSVRINPVLLDYAQRLSEEIVARAVQQWAEVDSRYSDIPYIECDVP</sequence>
<comment type="function">
    <text evidence="1">Binds to type I regulatory subunits of protein kinase A and may anchor/target them to the plasma membrane.</text>
</comment>
<comment type="subcellular location">
    <subcellularLocation>
        <location evidence="1">Cell membrane</location>
    </subcellularLocation>
</comment>
<comment type="PTM">
    <text evidence="1">May be palmitoylated at Cys-3.</text>
</comment>
<comment type="similarity">
    <text evidence="4">Belongs to the small membrane AKAP family.</text>
</comment>